<name>CVC2_EBVG</name>
<organismHost>
    <name type="scientific">Homo sapiens</name>
    <name type="common">Human</name>
    <dbReference type="NCBI Taxonomy" id="9606"/>
</organismHost>
<accession>P0C706</accession>
<accession>Q777B7</accession>
<evidence type="ECO:0000255" key="1">
    <source>
        <dbReference type="HAMAP-Rule" id="MF_04025"/>
    </source>
</evidence>
<evidence type="ECO:0000256" key="2">
    <source>
        <dbReference type="SAM" id="MobiDB-lite"/>
    </source>
</evidence>
<sequence>MALSGHVLIDPARLPRDTGPELMWAPSLRNSLRVSPEALELAEREAERARSERWDRCAQVLKNRLLRVELDGIMRDHLARAEEIRQDLDAVVAFSDGLESMQVRSPSTGGRSAPAPPSPSPAQPFTRLTGNAQYAVSISPTDPPLMVAGSLAQTLLGNLYGNINQWVPSFGPWYRTMSANAMQRRVFPKQLRGNLNFTNSVSLKLMTEVVAVLEGTTQDFFSDVRHLPDLQAALILSVAYLLLQGGSSHQQRPLPASREELLELGPESLEKIIADLKAKSPGGNFMILTSGNKEARQSIAPLNRQAAYPPGTFADNKIYNLFVGAGLLPTTAALNVPGAAGRDRDLVYRIANQIFGEDVPPFSSHQWNLRVGLAALEALMLVYTLCETANLAEAATRRLHLSSLLPQAMQRRKPAMASAGMPGAYPVQTLFRHGELFRFIWAHYVRPTVAADPQASISSLFPGLVLLALELKLMDGQAPSHYAINLTGQKFDTLFEIINQKLLFHDPAAMLAARTQLRLAFEDGVGVALGRPSPMLAAREILERQFSASDDYDRLYFLTLGYLASPVAPS</sequence>
<gene>
    <name evidence="1" type="primary">CVC2</name>
    <name type="ORF">BVRF1</name>
</gene>
<organism>
    <name type="scientific">Epstein-Barr virus (strain GD1)</name>
    <name type="common">HHV-4</name>
    <name type="synonym">Human gammaherpesvirus 4</name>
    <dbReference type="NCBI Taxonomy" id="10376"/>
    <lineage>
        <taxon>Viruses</taxon>
        <taxon>Duplodnaviria</taxon>
        <taxon>Heunggongvirae</taxon>
        <taxon>Peploviricota</taxon>
        <taxon>Herviviricetes</taxon>
        <taxon>Herpesvirales</taxon>
        <taxon>Orthoherpesviridae</taxon>
        <taxon>Gammaherpesvirinae</taxon>
        <taxon>Lymphocryptovirus</taxon>
        <taxon>Lymphocryptovirus humangamma4</taxon>
    </lineage>
</organism>
<proteinExistence type="inferred from homology"/>
<feature type="chain" id="PRO_0000408274" description="Capsid vertex component 2">
    <location>
        <begin position="1"/>
        <end position="570"/>
    </location>
</feature>
<feature type="region of interest" description="Interaction with major capsid protein/MCP" evidence="1">
    <location>
        <begin position="1"/>
        <end position="54"/>
    </location>
</feature>
<feature type="region of interest" description="Disordered" evidence="2">
    <location>
        <begin position="102"/>
        <end position="123"/>
    </location>
</feature>
<protein>
    <recommendedName>
        <fullName evidence="1">Capsid vertex component 2</fullName>
    </recommendedName>
</protein>
<keyword id="KW-0167">Capsid protein</keyword>
<keyword id="KW-1048">Host nucleus</keyword>
<keyword id="KW-0945">Host-virus interaction</keyword>
<keyword id="KW-0231">Viral genome packaging</keyword>
<keyword id="KW-1163">Viral penetration into host nucleus</keyword>
<keyword id="KW-1188">Viral release from host cell</keyword>
<keyword id="KW-0946">Virion</keyword>
<keyword id="KW-1160">Virus entry into host cell</keyword>
<comment type="function">
    <text evidence="1">Capsid vertex-specific component that plays a role during viral DNA encapsidation, assuring correct genome cleavage and presumably stabilizing capsids that contain full-length viral genomes. Participates in the interaction between the capsid and the tegument through interaction with the large tegument protein/LTP.</text>
</comment>
<comment type="subunit">
    <text evidence="1">Heterodimerizes with CVC1. Interacts with major capsid protein/MCP and triplex capsid protein 1/TRX1 at the pentamer vertices. Interacts with the large tegument protein/LTP.</text>
</comment>
<comment type="subcellular location">
    <subcellularLocation>
        <location evidence="1">Virion</location>
    </subcellularLocation>
    <subcellularLocation>
        <location evidence="1">Host nucleus</location>
    </subcellularLocation>
</comment>
<comment type="similarity">
    <text evidence="1">Belongs to the herpesviridae CVC2 protein family.</text>
</comment>
<dbReference type="EMBL" id="AY961628">
    <property type="protein sequence ID" value="AAY41149.1"/>
    <property type="molecule type" value="Genomic_DNA"/>
</dbReference>
<dbReference type="RefSeq" id="YP_401703.1">
    <property type="nucleotide sequence ID" value="NC_007605.1"/>
</dbReference>
<dbReference type="SMR" id="P0C706"/>
<dbReference type="IntAct" id="P0C706">
    <property type="interactions" value="11"/>
</dbReference>
<dbReference type="DNASU" id="3783732"/>
<dbReference type="GeneID" id="3783732"/>
<dbReference type="KEGG" id="vg:3783732"/>
<dbReference type="Proteomes" id="UP000007641">
    <property type="component" value="Genome"/>
</dbReference>
<dbReference type="GO" id="GO:0043657">
    <property type="term" value="C:host cell"/>
    <property type="evidence" value="ECO:0007669"/>
    <property type="project" value="GOC"/>
</dbReference>
<dbReference type="GO" id="GO:0042025">
    <property type="term" value="C:host cell nucleus"/>
    <property type="evidence" value="ECO:0007669"/>
    <property type="project" value="UniProtKB-SubCell"/>
</dbReference>
<dbReference type="GO" id="GO:0019028">
    <property type="term" value="C:viral capsid"/>
    <property type="evidence" value="ECO:0007669"/>
    <property type="project" value="UniProtKB-KW"/>
</dbReference>
<dbReference type="GO" id="GO:0046718">
    <property type="term" value="P:symbiont entry into host cell"/>
    <property type="evidence" value="ECO:0007669"/>
    <property type="project" value="UniProtKB-KW"/>
</dbReference>
<dbReference type="GO" id="GO:0019072">
    <property type="term" value="P:viral genome packaging"/>
    <property type="evidence" value="ECO:0007669"/>
    <property type="project" value="InterPro"/>
</dbReference>
<dbReference type="GO" id="GO:0075732">
    <property type="term" value="P:viral penetration into host nucleus"/>
    <property type="evidence" value="ECO:0007669"/>
    <property type="project" value="UniProtKB-KW"/>
</dbReference>
<dbReference type="HAMAP" id="MF_04025">
    <property type="entry name" value="HSV_CVC2"/>
    <property type="match status" value="1"/>
</dbReference>
<dbReference type="InterPro" id="IPR002493">
    <property type="entry name" value="Herpes_UL25"/>
</dbReference>
<dbReference type="Pfam" id="PF01499">
    <property type="entry name" value="Herpes_UL25"/>
    <property type="match status" value="1"/>
</dbReference>
<reference key="1">
    <citation type="journal article" date="2005" name="J. Virol.">
        <title>Genomic sequence analysis of Epstein-Barr virus strain GD1 from a nasopharyngeal carcinoma patient.</title>
        <authorList>
            <person name="Zeng M.-S."/>
            <person name="Li D.-J."/>
            <person name="Liu Q.-L."/>
            <person name="Song L.-B."/>
            <person name="Li M.-Z."/>
            <person name="Zhang R.-H."/>
            <person name="Yu X.-J."/>
            <person name="Wang H.-M."/>
            <person name="Ernberg I."/>
            <person name="Zeng Y.-X."/>
        </authorList>
    </citation>
    <scope>NUCLEOTIDE SEQUENCE [LARGE SCALE GENOMIC DNA]</scope>
</reference>